<evidence type="ECO:0000255" key="1">
    <source>
        <dbReference type="HAMAP-Rule" id="MF_00394"/>
    </source>
</evidence>
<name>GPDA_ECO7I</name>
<proteinExistence type="inferred from homology"/>
<keyword id="KW-0963">Cytoplasm</keyword>
<keyword id="KW-0444">Lipid biosynthesis</keyword>
<keyword id="KW-0443">Lipid metabolism</keyword>
<keyword id="KW-0520">NAD</keyword>
<keyword id="KW-0521">NADP</keyword>
<keyword id="KW-0547">Nucleotide-binding</keyword>
<keyword id="KW-0560">Oxidoreductase</keyword>
<keyword id="KW-0594">Phospholipid biosynthesis</keyword>
<keyword id="KW-1208">Phospholipid metabolism</keyword>
<sequence>MNQRNASMTVIGAGSYGTALAITLARNGHEVVLWGHDPEHIATLERDRCNAAFLPDVPFPDTLHLESDLATALAASRNILVVVPSHVFGEVLRQIKPLMRPDARLVWATKGLEAETGRLLQDVAREALGDQIPLAVISGPTFAKELAAGLPTAISLASTDQTFADDLQQLLHCGKSFRVYSNPDFIGVQLGGAVKNVIAIGAGMSDGIGFGANARTALITRGLAEMSRLGAALGADPATFMGMAGLGDLVLTCTDNQSRNRRFGMMLGQGMDVQSAQEKIGQVVEGYRNTKEVRELAHRFGVEMPITEEIYQVLYCGKNAREAALTLLGRARKDERSSH</sequence>
<comment type="function">
    <text evidence="1">Catalyzes the reduction of the glycolytic intermediate dihydroxyacetone phosphate (DHAP) to sn-glycerol 3-phosphate (G3P), the key precursor for phospholipid synthesis.</text>
</comment>
<comment type="catalytic activity">
    <reaction evidence="1">
        <text>sn-glycerol 3-phosphate + NAD(+) = dihydroxyacetone phosphate + NADH + H(+)</text>
        <dbReference type="Rhea" id="RHEA:11092"/>
        <dbReference type="ChEBI" id="CHEBI:15378"/>
        <dbReference type="ChEBI" id="CHEBI:57540"/>
        <dbReference type="ChEBI" id="CHEBI:57597"/>
        <dbReference type="ChEBI" id="CHEBI:57642"/>
        <dbReference type="ChEBI" id="CHEBI:57945"/>
        <dbReference type="EC" id="1.1.1.94"/>
    </reaction>
    <physiologicalReaction direction="right-to-left" evidence="1">
        <dbReference type="Rhea" id="RHEA:11094"/>
    </physiologicalReaction>
</comment>
<comment type="catalytic activity">
    <reaction evidence="1">
        <text>sn-glycerol 3-phosphate + NADP(+) = dihydroxyacetone phosphate + NADPH + H(+)</text>
        <dbReference type="Rhea" id="RHEA:11096"/>
        <dbReference type="ChEBI" id="CHEBI:15378"/>
        <dbReference type="ChEBI" id="CHEBI:57597"/>
        <dbReference type="ChEBI" id="CHEBI:57642"/>
        <dbReference type="ChEBI" id="CHEBI:57783"/>
        <dbReference type="ChEBI" id="CHEBI:58349"/>
        <dbReference type="EC" id="1.1.1.94"/>
    </reaction>
    <physiologicalReaction direction="right-to-left" evidence="1">
        <dbReference type="Rhea" id="RHEA:11098"/>
    </physiologicalReaction>
</comment>
<comment type="pathway">
    <text evidence="1">Membrane lipid metabolism; glycerophospholipid metabolism.</text>
</comment>
<comment type="subcellular location">
    <subcellularLocation>
        <location evidence="1">Cytoplasm</location>
    </subcellularLocation>
</comment>
<comment type="similarity">
    <text evidence="1">Belongs to the NAD-dependent glycerol-3-phosphate dehydrogenase family.</text>
</comment>
<dbReference type="EC" id="1.1.1.94" evidence="1"/>
<dbReference type="EMBL" id="CU928164">
    <property type="protein sequence ID" value="CAR20237.1"/>
    <property type="molecule type" value="Genomic_DNA"/>
</dbReference>
<dbReference type="RefSeq" id="WP_001076194.1">
    <property type="nucleotide sequence ID" value="NC_011750.1"/>
</dbReference>
<dbReference type="RefSeq" id="YP_002410006.1">
    <property type="nucleotide sequence ID" value="NC_011750.1"/>
</dbReference>
<dbReference type="SMR" id="B7NPB7"/>
<dbReference type="STRING" id="585057.ECIAI39_4129"/>
<dbReference type="GeneID" id="93778322"/>
<dbReference type="KEGG" id="ect:ECIAI39_4129"/>
<dbReference type="PATRIC" id="fig|585057.6.peg.4279"/>
<dbReference type="HOGENOM" id="CLU_033449_0_2_6"/>
<dbReference type="UniPathway" id="UPA00940"/>
<dbReference type="Proteomes" id="UP000000749">
    <property type="component" value="Chromosome"/>
</dbReference>
<dbReference type="GO" id="GO:0005829">
    <property type="term" value="C:cytosol"/>
    <property type="evidence" value="ECO:0007669"/>
    <property type="project" value="TreeGrafter"/>
</dbReference>
<dbReference type="GO" id="GO:0047952">
    <property type="term" value="F:glycerol-3-phosphate dehydrogenase [NAD(P)+] activity"/>
    <property type="evidence" value="ECO:0007669"/>
    <property type="project" value="UniProtKB-UniRule"/>
</dbReference>
<dbReference type="GO" id="GO:0051287">
    <property type="term" value="F:NAD binding"/>
    <property type="evidence" value="ECO:0007669"/>
    <property type="project" value="InterPro"/>
</dbReference>
<dbReference type="GO" id="GO:0005975">
    <property type="term" value="P:carbohydrate metabolic process"/>
    <property type="evidence" value="ECO:0007669"/>
    <property type="project" value="InterPro"/>
</dbReference>
<dbReference type="GO" id="GO:0046167">
    <property type="term" value="P:glycerol-3-phosphate biosynthetic process"/>
    <property type="evidence" value="ECO:0007669"/>
    <property type="project" value="UniProtKB-UniRule"/>
</dbReference>
<dbReference type="GO" id="GO:0046168">
    <property type="term" value="P:glycerol-3-phosphate catabolic process"/>
    <property type="evidence" value="ECO:0007669"/>
    <property type="project" value="InterPro"/>
</dbReference>
<dbReference type="GO" id="GO:0046474">
    <property type="term" value="P:glycerophospholipid biosynthetic process"/>
    <property type="evidence" value="ECO:0007669"/>
    <property type="project" value="TreeGrafter"/>
</dbReference>
<dbReference type="FunFam" id="1.10.1040.10:FF:000001">
    <property type="entry name" value="Glycerol-3-phosphate dehydrogenase [NAD(P)+]"/>
    <property type="match status" value="1"/>
</dbReference>
<dbReference type="FunFam" id="3.40.50.720:FF:000019">
    <property type="entry name" value="Glycerol-3-phosphate dehydrogenase [NAD(P)+]"/>
    <property type="match status" value="1"/>
</dbReference>
<dbReference type="Gene3D" id="1.10.1040.10">
    <property type="entry name" value="N-(1-d-carboxylethyl)-l-norvaline Dehydrogenase, domain 2"/>
    <property type="match status" value="1"/>
</dbReference>
<dbReference type="Gene3D" id="3.40.50.720">
    <property type="entry name" value="NAD(P)-binding Rossmann-like Domain"/>
    <property type="match status" value="1"/>
</dbReference>
<dbReference type="HAMAP" id="MF_00394">
    <property type="entry name" value="NAD_Glyc3P_dehydrog"/>
    <property type="match status" value="1"/>
</dbReference>
<dbReference type="InterPro" id="IPR008927">
    <property type="entry name" value="6-PGluconate_DH-like_C_sf"/>
</dbReference>
<dbReference type="InterPro" id="IPR013328">
    <property type="entry name" value="6PGD_dom2"/>
</dbReference>
<dbReference type="InterPro" id="IPR006168">
    <property type="entry name" value="G3P_DH_NAD-dep"/>
</dbReference>
<dbReference type="InterPro" id="IPR006109">
    <property type="entry name" value="G3P_DH_NAD-dep_C"/>
</dbReference>
<dbReference type="InterPro" id="IPR011128">
    <property type="entry name" value="G3P_DH_NAD-dep_N"/>
</dbReference>
<dbReference type="InterPro" id="IPR036291">
    <property type="entry name" value="NAD(P)-bd_dom_sf"/>
</dbReference>
<dbReference type="NCBIfam" id="NF000939">
    <property type="entry name" value="PRK00094.1-1"/>
    <property type="match status" value="1"/>
</dbReference>
<dbReference type="NCBIfam" id="NF000940">
    <property type="entry name" value="PRK00094.1-2"/>
    <property type="match status" value="1"/>
</dbReference>
<dbReference type="NCBIfam" id="NF000942">
    <property type="entry name" value="PRK00094.1-4"/>
    <property type="match status" value="1"/>
</dbReference>
<dbReference type="PANTHER" id="PTHR11728">
    <property type="entry name" value="GLYCEROL-3-PHOSPHATE DEHYDROGENASE"/>
    <property type="match status" value="1"/>
</dbReference>
<dbReference type="PANTHER" id="PTHR11728:SF1">
    <property type="entry name" value="GLYCEROL-3-PHOSPHATE DEHYDROGENASE [NAD(+)] 2, CHLOROPLASTIC"/>
    <property type="match status" value="1"/>
</dbReference>
<dbReference type="Pfam" id="PF07479">
    <property type="entry name" value="NAD_Gly3P_dh_C"/>
    <property type="match status" value="1"/>
</dbReference>
<dbReference type="Pfam" id="PF01210">
    <property type="entry name" value="NAD_Gly3P_dh_N"/>
    <property type="match status" value="1"/>
</dbReference>
<dbReference type="PIRSF" id="PIRSF000114">
    <property type="entry name" value="Glycerol-3-P_dh"/>
    <property type="match status" value="1"/>
</dbReference>
<dbReference type="PRINTS" id="PR00077">
    <property type="entry name" value="GPDHDRGNASE"/>
</dbReference>
<dbReference type="SUPFAM" id="SSF48179">
    <property type="entry name" value="6-phosphogluconate dehydrogenase C-terminal domain-like"/>
    <property type="match status" value="1"/>
</dbReference>
<dbReference type="SUPFAM" id="SSF51735">
    <property type="entry name" value="NAD(P)-binding Rossmann-fold domains"/>
    <property type="match status" value="1"/>
</dbReference>
<dbReference type="PROSITE" id="PS00957">
    <property type="entry name" value="NAD_G3PDH"/>
    <property type="match status" value="1"/>
</dbReference>
<feature type="chain" id="PRO_1000190147" description="Glycerol-3-phosphate dehydrogenase [NAD(P)+]">
    <location>
        <begin position="1"/>
        <end position="339"/>
    </location>
</feature>
<feature type="active site" description="Proton acceptor" evidence="1">
    <location>
        <position position="195"/>
    </location>
</feature>
<feature type="binding site" evidence="1">
    <location>
        <position position="15"/>
    </location>
    <ligand>
        <name>NADPH</name>
        <dbReference type="ChEBI" id="CHEBI:57783"/>
    </ligand>
</feature>
<feature type="binding site" evidence="1">
    <location>
        <position position="16"/>
    </location>
    <ligand>
        <name>NADPH</name>
        <dbReference type="ChEBI" id="CHEBI:57783"/>
    </ligand>
</feature>
<feature type="binding site" evidence="1">
    <location>
        <position position="36"/>
    </location>
    <ligand>
        <name>NADPH</name>
        <dbReference type="ChEBI" id="CHEBI:57783"/>
    </ligand>
</feature>
<feature type="binding site" evidence="1">
    <location>
        <position position="110"/>
    </location>
    <ligand>
        <name>NADPH</name>
        <dbReference type="ChEBI" id="CHEBI:57783"/>
    </ligand>
</feature>
<feature type="binding site" evidence="1">
    <location>
        <position position="110"/>
    </location>
    <ligand>
        <name>sn-glycerol 3-phosphate</name>
        <dbReference type="ChEBI" id="CHEBI:57597"/>
    </ligand>
</feature>
<feature type="binding site" evidence="1">
    <location>
        <position position="139"/>
    </location>
    <ligand>
        <name>sn-glycerol 3-phosphate</name>
        <dbReference type="ChEBI" id="CHEBI:57597"/>
    </ligand>
</feature>
<feature type="binding site" evidence="1">
    <location>
        <position position="141"/>
    </location>
    <ligand>
        <name>sn-glycerol 3-phosphate</name>
        <dbReference type="ChEBI" id="CHEBI:57597"/>
    </ligand>
</feature>
<feature type="binding site" evidence="1">
    <location>
        <position position="143"/>
    </location>
    <ligand>
        <name>NADPH</name>
        <dbReference type="ChEBI" id="CHEBI:57783"/>
    </ligand>
</feature>
<feature type="binding site" evidence="1">
    <location>
        <position position="195"/>
    </location>
    <ligand>
        <name>sn-glycerol 3-phosphate</name>
        <dbReference type="ChEBI" id="CHEBI:57597"/>
    </ligand>
</feature>
<feature type="binding site" evidence="1">
    <location>
        <position position="248"/>
    </location>
    <ligand>
        <name>sn-glycerol 3-phosphate</name>
        <dbReference type="ChEBI" id="CHEBI:57597"/>
    </ligand>
</feature>
<feature type="binding site" evidence="1">
    <location>
        <position position="258"/>
    </location>
    <ligand>
        <name>sn-glycerol 3-phosphate</name>
        <dbReference type="ChEBI" id="CHEBI:57597"/>
    </ligand>
</feature>
<feature type="binding site" evidence="1">
    <location>
        <position position="259"/>
    </location>
    <ligand>
        <name>NADPH</name>
        <dbReference type="ChEBI" id="CHEBI:57783"/>
    </ligand>
</feature>
<feature type="binding site" evidence="1">
    <location>
        <position position="259"/>
    </location>
    <ligand>
        <name>sn-glycerol 3-phosphate</name>
        <dbReference type="ChEBI" id="CHEBI:57597"/>
    </ligand>
</feature>
<feature type="binding site" evidence="1">
    <location>
        <position position="260"/>
    </location>
    <ligand>
        <name>sn-glycerol 3-phosphate</name>
        <dbReference type="ChEBI" id="CHEBI:57597"/>
    </ligand>
</feature>
<feature type="binding site" evidence="1">
    <location>
        <position position="283"/>
    </location>
    <ligand>
        <name>NADPH</name>
        <dbReference type="ChEBI" id="CHEBI:57783"/>
    </ligand>
</feature>
<feature type="binding site" evidence="1">
    <location>
        <position position="285"/>
    </location>
    <ligand>
        <name>NADPH</name>
        <dbReference type="ChEBI" id="CHEBI:57783"/>
    </ligand>
</feature>
<organism>
    <name type="scientific">Escherichia coli O7:K1 (strain IAI39 / ExPEC)</name>
    <dbReference type="NCBI Taxonomy" id="585057"/>
    <lineage>
        <taxon>Bacteria</taxon>
        <taxon>Pseudomonadati</taxon>
        <taxon>Pseudomonadota</taxon>
        <taxon>Gammaproteobacteria</taxon>
        <taxon>Enterobacterales</taxon>
        <taxon>Enterobacteriaceae</taxon>
        <taxon>Escherichia</taxon>
    </lineage>
</organism>
<reference key="1">
    <citation type="journal article" date="2009" name="PLoS Genet.">
        <title>Organised genome dynamics in the Escherichia coli species results in highly diverse adaptive paths.</title>
        <authorList>
            <person name="Touchon M."/>
            <person name="Hoede C."/>
            <person name="Tenaillon O."/>
            <person name="Barbe V."/>
            <person name="Baeriswyl S."/>
            <person name="Bidet P."/>
            <person name="Bingen E."/>
            <person name="Bonacorsi S."/>
            <person name="Bouchier C."/>
            <person name="Bouvet O."/>
            <person name="Calteau A."/>
            <person name="Chiapello H."/>
            <person name="Clermont O."/>
            <person name="Cruveiller S."/>
            <person name="Danchin A."/>
            <person name="Diard M."/>
            <person name="Dossat C."/>
            <person name="Karoui M.E."/>
            <person name="Frapy E."/>
            <person name="Garry L."/>
            <person name="Ghigo J.M."/>
            <person name="Gilles A.M."/>
            <person name="Johnson J."/>
            <person name="Le Bouguenec C."/>
            <person name="Lescat M."/>
            <person name="Mangenot S."/>
            <person name="Martinez-Jehanne V."/>
            <person name="Matic I."/>
            <person name="Nassif X."/>
            <person name="Oztas S."/>
            <person name="Petit M.A."/>
            <person name="Pichon C."/>
            <person name="Rouy Z."/>
            <person name="Ruf C.S."/>
            <person name="Schneider D."/>
            <person name="Tourret J."/>
            <person name="Vacherie B."/>
            <person name="Vallenet D."/>
            <person name="Medigue C."/>
            <person name="Rocha E.P.C."/>
            <person name="Denamur E."/>
        </authorList>
    </citation>
    <scope>NUCLEOTIDE SEQUENCE [LARGE SCALE GENOMIC DNA]</scope>
    <source>
        <strain>IAI39 / ExPEC</strain>
    </source>
</reference>
<gene>
    <name evidence="1" type="primary">gpsA</name>
    <name type="ordered locus">ECIAI39_4129</name>
</gene>
<accession>B7NPB7</accession>
<protein>
    <recommendedName>
        <fullName evidence="1">Glycerol-3-phosphate dehydrogenase [NAD(P)+]</fullName>
        <ecNumber evidence="1">1.1.1.94</ecNumber>
    </recommendedName>
    <alternativeName>
        <fullName evidence="1">NAD(P)(+)-dependent glycerol-3-phosphate dehydrogenase</fullName>
    </alternativeName>
    <alternativeName>
        <fullName evidence="1">NAD(P)H-dependent dihydroxyacetone-phosphate reductase</fullName>
    </alternativeName>
</protein>